<sequence length="487" mass="54063">MYVIDHDRAGGYWGAVYVFTAIKGLQVVIDGPVGCENLPATAVLHYTDALPPHELPIVVTGLGEEELGREGTEGAMKRAHSVLDPDLPAVVVTGSIAEMIGGGVTPEGTTIQRFLPRTIDEDQWQCANRAMFWLWSEYGLRKIPQRTPFEQRPAGEKPRVNIIGPSYGTFNMPSDLAEIRRLVEGIGAEVNMVFPLGSHLADVQKLVDADVNVCMYREFGRMLCEALERPYLQAPIGMHSTTAFLRELGRLLNLDPEPFIEREKHTTLKPIWDLWRSVTQDFFGTANFGIVAGETYARGVRHFLEDELGLPCNFAVARKAGEKTDNESVRELVHTKTPLVLFGSYNERMYLAETTSGHGPKPAYIPASFPGAIIRRHTGTPFMGYAGATYLVQEFCNALFDALFNILPLGTELDRIDATPSRRGDSRPWDDEAQQVLRDYVARQPVLVQISAAKQLRDRAEREAGAAGEERVTASRVRQLLGQKEPA</sequence>
<protein>
    <recommendedName>
        <fullName>Chlorophyllide reductase subunit Z</fullName>
        <ecNumber evidence="1">1.3.7.15</ecNumber>
    </recommendedName>
    <alternativeName>
        <fullName>Chlorin reductase subunit Z</fullName>
    </alternativeName>
</protein>
<comment type="function">
    <text evidence="1">Converts chlorophylls (Chl) into bacteriochlorophylls (BChl) by reducing ring B of the tetrapyrrole.</text>
</comment>
<comment type="catalytic activity">
    <reaction evidence="1">
        <text>3-deacetyl-3-vinylbacteriochlorophyllide a + 2 oxidized [2Fe-2S]-[ferredoxin] + ADP + phosphate = chlorophyllide a + 2 reduced [2Fe-2S]-[ferredoxin] + ATP + H2O + H(+)</text>
        <dbReference type="Rhea" id="RHEA:37051"/>
        <dbReference type="Rhea" id="RHEA-COMP:10000"/>
        <dbReference type="Rhea" id="RHEA-COMP:10001"/>
        <dbReference type="ChEBI" id="CHEBI:15377"/>
        <dbReference type="ChEBI" id="CHEBI:15378"/>
        <dbReference type="ChEBI" id="CHEBI:30616"/>
        <dbReference type="ChEBI" id="CHEBI:33737"/>
        <dbReference type="ChEBI" id="CHEBI:33738"/>
        <dbReference type="ChEBI" id="CHEBI:43474"/>
        <dbReference type="ChEBI" id="CHEBI:83348"/>
        <dbReference type="ChEBI" id="CHEBI:83373"/>
        <dbReference type="ChEBI" id="CHEBI:456216"/>
        <dbReference type="EC" id="1.3.7.15"/>
    </reaction>
</comment>
<comment type="catalytic activity">
    <reaction evidence="1">
        <text>bacteriochlorophyllide a + 2 oxidized [2Fe-2S]-[ferredoxin] + ADP + phosphate = 3-acetyl-3-devinylchlorophyllide a + 2 reduced [2Fe-2S]-[ferredoxin] + ATP + H2O + H(+)</text>
        <dbReference type="Rhea" id="RHEA:48944"/>
        <dbReference type="Rhea" id="RHEA-COMP:10000"/>
        <dbReference type="Rhea" id="RHEA-COMP:10001"/>
        <dbReference type="ChEBI" id="CHEBI:15377"/>
        <dbReference type="ChEBI" id="CHEBI:15378"/>
        <dbReference type="ChEBI" id="CHEBI:30616"/>
        <dbReference type="ChEBI" id="CHEBI:33737"/>
        <dbReference type="ChEBI" id="CHEBI:33738"/>
        <dbReference type="ChEBI" id="CHEBI:43474"/>
        <dbReference type="ChEBI" id="CHEBI:90794"/>
        <dbReference type="ChEBI" id="CHEBI:90795"/>
        <dbReference type="ChEBI" id="CHEBI:456216"/>
        <dbReference type="EC" id="1.3.7.15"/>
    </reaction>
</comment>
<comment type="catalytic activity">
    <reaction evidence="1">
        <text>3-deacetyl-3-(1-hydroxyethyl)bacteriochlorophyllide a + 2 oxidized [2Fe-2S]-[ferredoxin] + ADP + phosphate = 3-devinyl-3-(1-hydroxyethyl)chlorophyllide a + 2 reduced [2Fe-2S]-[ferredoxin] + ATP + H2O + H(+)</text>
        <dbReference type="Rhea" id="RHEA:48948"/>
        <dbReference type="Rhea" id="RHEA-COMP:10000"/>
        <dbReference type="Rhea" id="RHEA-COMP:10001"/>
        <dbReference type="ChEBI" id="CHEBI:15377"/>
        <dbReference type="ChEBI" id="CHEBI:15378"/>
        <dbReference type="ChEBI" id="CHEBI:30616"/>
        <dbReference type="ChEBI" id="CHEBI:33737"/>
        <dbReference type="ChEBI" id="CHEBI:33738"/>
        <dbReference type="ChEBI" id="CHEBI:43474"/>
        <dbReference type="ChEBI" id="CHEBI:90791"/>
        <dbReference type="ChEBI" id="CHEBI:90792"/>
        <dbReference type="ChEBI" id="CHEBI:456216"/>
        <dbReference type="EC" id="1.3.7.15"/>
    </reaction>
</comment>
<comment type="pathway">
    <text>Porphyrin-containing compound metabolism; bacteriochlorophyll biosynthesis.</text>
</comment>
<comment type="subunit">
    <text evidence="1">Chlorophyllide reductase is composed of three subunits; BchX, BchY and BchZ. Forms a heterodimer of one BchY and one BchZ subunit.</text>
</comment>
<comment type="similarity">
    <text evidence="3">Belongs to the ChlB/BchB/BchZ family.</text>
</comment>
<gene>
    <name type="primary">bchZ</name>
    <name type="ordered locus">RGE_33680</name>
</gene>
<feature type="chain" id="PRO_0000219850" description="Chlorophyllide reductase subunit Z">
    <location>
        <begin position="1"/>
        <end position="487"/>
    </location>
</feature>
<feature type="region of interest" description="Disordered" evidence="2">
    <location>
        <begin position="460"/>
        <end position="487"/>
    </location>
</feature>
<feature type="compositionally biased region" description="Basic and acidic residues" evidence="2">
    <location>
        <begin position="460"/>
        <end position="473"/>
    </location>
</feature>
<reference key="1">
    <citation type="journal article" date="2001" name="J. Mol. Evol.">
        <title>Horizontal transfer of the photosynthesis gene cluster and operon rearrangement in purple bacteria.</title>
        <authorList>
            <person name="Igarashi N."/>
            <person name="Harada J."/>
            <person name="Nagashima S."/>
            <person name="Matsuura K."/>
            <person name="Shimada K."/>
            <person name="Nagashima K.V.P."/>
        </authorList>
    </citation>
    <scope>NUCLEOTIDE SEQUENCE [GENOMIC DNA]</scope>
    <source>
        <strain>NBRC 100245 / IL144</strain>
    </source>
</reference>
<reference key="2">
    <citation type="journal article" date="2012" name="J. Bacteriol.">
        <title>Complete genome sequence of phototrophic betaproteobacterium Rubrivivax gelatinosus IL144.</title>
        <authorList>
            <person name="Nagashima S."/>
            <person name="Kamimura A."/>
            <person name="Shimizu T."/>
            <person name="Nakamura-Isaki S."/>
            <person name="Aono E."/>
            <person name="Sakamoto K."/>
            <person name="Ichikawa N."/>
            <person name="Nakazawa H."/>
            <person name="Sekine M."/>
            <person name="Yamazaki S."/>
            <person name="Fujita N."/>
            <person name="Shimada K."/>
            <person name="Hanada S."/>
            <person name="Nagashima K.V."/>
        </authorList>
    </citation>
    <scope>NUCLEOTIDE SEQUENCE [LARGE SCALE GENOMIC DNA]</scope>
    <source>
        <strain>NBRC 100245 / IL144</strain>
    </source>
</reference>
<dbReference type="EC" id="1.3.7.15" evidence="1"/>
<dbReference type="EMBL" id="AB034704">
    <property type="protein sequence ID" value="BAA94037.1"/>
    <property type="molecule type" value="Genomic_DNA"/>
</dbReference>
<dbReference type="EMBL" id="AP012320">
    <property type="protein sequence ID" value="BAL96707.1"/>
    <property type="molecule type" value="Genomic_DNA"/>
</dbReference>
<dbReference type="PIR" id="T50884">
    <property type="entry name" value="T50884"/>
</dbReference>
<dbReference type="RefSeq" id="WP_014429567.1">
    <property type="nucleotide sequence ID" value="NC_017075.1"/>
</dbReference>
<dbReference type="SMR" id="Q9JPB9"/>
<dbReference type="STRING" id="983917.RGE_33680"/>
<dbReference type="KEGG" id="rge:RGE_33680"/>
<dbReference type="PATRIC" id="fig|983917.3.peg.3293"/>
<dbReference type="eggNOG" id="COG2710">
    <property type="taxonomic scope" value="Bacteria"/>
</dbReference>
<dbReference type="HOGENOM" id="CLU_564837_0_0_4"/>
<dbReference type="UniPathway" id="UPA00669"/>
<dbReference type="Proteomes" id="UP000007883">
    <property type="component" value="Chromosome"/>
</dbReference>
<dbReference type="GO" id="GO:0016730">
    <property type="term" value="F:oxidoreductase activity, acting on iron-sulfur proteins as donors"/>
    <property type="evidence" value="ECO:0007669"/>
    <property type="project" value="InterPro"/>
</dbReference>
<dbReference type="GO" id="GO:0030494">
    <property type="term" value="P:bacteriochlorophyll biosynthetic process"/>
    <property type="evidence" value="ECO:0007669"/>
    <property type="project" value="UniProtKB-UniPathway"/>
</dbReference>
<dbReference type="GO" id="GO:0015979">
    <property type="term" value="P:photosynthesis"/>
    <property type="evidence" value="ECO:0007669"/>
    <property type="project" value="UniProtKB-KW"/>
</dbReference>
<dbReference type="CDD" id="cd01982">
    <property type="entry name" value="Chlide_reductase_Z"/>
    <property type="match status" value="1"/>
</dbReference>
<dbReference type="Gene3D" id="3.40.50.1980">
    <property type="entry name" value="Nitrogenase molybdenum iron protein domain"/>
    <property type="match status" value="1"/>
</dbReference>
<dbReference type="InterPro" id="IPR010244">
    <property type="entry name" value="BchZ"/>
</dbReference>
<dbReference type="InterPro" id="IPR050152">
    <property type="entry name" value="ChlB/BchB/BchZ"/>
</dbReference>
<dbReference type="InterPro" id="IPR013580">
    <property type="entry name" value="LI-POR_suB-like_C"/>
</dbReference>
<dbReference type="InterPro" id="IPR000510">
    <property type="entry name" value="Nase/OxRdtase_comp1"/>
</dbReference>
<dbReference type="InterPro" id="IPR016209">
    <property type="entry name" value="Protochlorophyllide_Rdtase"/>
</dbReference>
<dbReference type="NCBIfam" id="TIGR02014">
    <property type="entry name" value="BchZ"/>
    <property type="match status" value="1"/>
</dbReference>
<dbReference type="PANTHER" id="PTHR33712">
    <property type="entry name" value="LIGHT-INDEPENDENT PROTOCHLOROPHYLLIDE REDUCTASE SUBUNIT B"/>
    <property type="match status" value="1"/>
</dbReference>
<dbReference type="PANTHER" id="PTHR33712:SF7">
    <property type="entry name" value="LIGHT-INDEPENDENT PROTOCHLOROPHYLLIDE REDUCTASE SUBUNIT B"/>
    <property type="match status" value="1"/>
</dbReference>
<dbReference type="Pfam" id="PF00148">
    <property type="entry name" value="Oxidored_nitro"/>
    <property type="match status" value="1"/>
</dbReference>
<dbReference type="Pfam" id="PF08369">
    <property type="entry name" value="PCP_red"/>
    <property type="match status" value="1"/>
</dbReference>
<dbReference type="PIRSF" id="PIRSF000163">
    <property type="entry name" value="PCP_ChlB"/>
    <property type="match status" value="1"/>
</dbReference>
<dbReference type="SUPFAM" id="SSF53807">
    <property type="entry name" value="Helical backbone' metal receptor"/>
    <property type="match status" value="1"/>
</dbReference>
<evidence type="ECO:0000250" key="1">
    <source>
        <dbReference type="UniProtKB" id="P26179"/>
    </source>
</evidence>
<evidence type="ECO:0000256" key="2">
    <source>
        <dbReference type="SAM" id="MobiDB-lite"/>
    </source>
</evidence>
<evidence type="ECO:0000305" key="3"/>
<keyword id="KW-0077">Bacteriochlorophyll biosynthesis</keyword>
<keyword id="KW-0149">Chlorophyll biosynthesis</keyword>
<keyword id="KW-0560">Oxidoreductase</keyword>
<keyword id="KW-0602">Photosynthesis</keyword>
<keyword id="KW-1185">Reference proteome</keyword>
<organism>
    <name type="scientific">Rubrivivax gelatinosus (strain NBRC 100245 / IL144)</name>
    <dbReference type="NCBI Taxonomy" id="983917"/>
    <lineage>
        <taxon>Bacteria</taxon>
        <taxon>Pseudomonadati</taxon>
        <taxon>Pseudomonadota</taxon>
        <taxon>Betaproteobacteria</taxon>
        <taxon>Burkholderiales</taxon>
        <taxon>Sphaerotilaceae</taxon>
        <taxon>Rubrivivax</taxon>
    </lineage>
</organism>
<accession>Q9JPB9</accession>
<accession>I0HUM0</accession>
<proteinExistence type="inferred from homology"/>
<name>BCHZ_RUBGI</name>